<comment type="function">
    <text evidence="1">Involved in both the arginine and lysine biosynthetic pathways.</text>
</comment>
<comment type="catalytic activity">
    <reaction evidence="1">
        <text>[amino-group carrier protein]-C-terminal-N-(1-carboxy-5-oxopentan-1-yl)-L-glutamine + phosphate + NADP(+) = [amino-group carrier protein]-C-terminal-N-(1-carboxy-5-phosphooxy-5-oxopentan-1-yl)-L-glutamine + NADPH + H(+)</text>
        <dbReference type="Rhea" id="RHEA:41948"/>
        <dbReference type="Rhea" id="RHEA-COMP:9712"/>
        <dbReference type="Rhea" id="RHEA-COMP:9714"/>
        <dbReference type="ChEBI" id="CHEBI:15378"/>
        <dbReference type="ChEBI" id="CHEBI:43474"/>
        <dbReference type="ChEBI" id="CHEBI:57783"/>
        <dbReference type="ChEBI" id="CHEBI:58349"/>
        <dbReference type="ChEBI" id="CHEBI:78499"/>
        <dbReference type="ChEBI" id="CHEBI:78501"/>
        <dbReference type="EC" id="1.2.1.103"/>
    </reaction>
</comment>
<comment type="catalytic activity">
    <reaction evidence="1">
        <text>[amino-group carrier protein]-C-terminal-gamma-(L-glutamyl-5-semialdehyde)-L-glutamate + phosphate + NADP(+) = [amino-group carrier protein]-C-terminal-gamma-(5-phospho-L-glutamyl)-L-glutamate + NADPH + H(+)</text>
        <dbReference type="Rhea" id="RHEA:52668"/>
        <dbReference type="Rhea" id="RHEA-COMP:13313"/>
        <dbReference type="Rhea" id="RHEA-COMP:13327"/>
        <dbReference type="ChEBI" id="CHEBI:15378"/>
        <dbReference type="ChEBI" id="CHEBI:43474"/>
        <dbReference type="ChEBI" id="CHEBI:57783"/>
        <dbReference type="ChEBI" id="CHEBI:58349"/>
        <dbReference type="ChEBI" id="CHEBI:136717"/>
        <dbReference type="ChEBI" id="CHEBI:136761"/>
        <dbReference type="EC" id="1.2.1.106"/>
    </reaction>
</comment>
<comment type="pathway">
    <text evidence="1">Amino-acid biosynthesis; L-lysine biosynthesis via AAA pathway; L-lysine from L-alpha-aminoadipate (Thermus route): step 3/5.</text>
</comment>
<comment type="pathway">
    <text evidence="1">Amino-acid biosynthesis; L-arginine biosynthesis.</text>
</comment>
<comment type="subcellular location">
    <subcellularLocation>
        <location evidence="1">Cytoplasm</location>
    </subcellularLocation>
</comment>
<comment type="similarity">
    <text evidence="1">Belongs to the NAGSA dehydrogenase family. Type 1 subfamily. LysY sub-subfamily.</text>
</comment>
<protein>
    <recommendedName>
        <fullName evidence="1">Putative [LysW]-L-2-aminoadipate/[LysW]-L-glutamate phosphate reductase</fullName>
        <ecNumber evidence="1">1.2.1.103</ecNumber>
        <ecNumber evidence="1">1.2.1.106</ecNumber>
    </recommendedName>
</protein>
<feature type="chain" id="PRO_0000112482" description="Putative [LysW]-L-2-aminoadipate/[LysW]-L-glutamate phosphate reductase">
    <location>
        <begin position="1"/>
        <end position="355"/>
    </location>
</feature>
<feature type="active site" evidence="1">
    <location>
        <position position="153"/>
    </location>
</feature>
<feature type="binding site" evidence="1">
    <location>
        <begin position="13"/>
        <end position="16"/>
    </location>
    <ligand>
        <name>NADP(+)</name>
        <dbReference type="ChEBI" id="CHEBI:58349"/>
    </ligand>
</feature>
<feature type="binding site" evidence="1">
    <location>
        <position position="323"/>
    </location>
    <ligand>
        <name>NADP(+)</name>
        <dbReference type="ChEBI" id="CHEBI:58349"/>
    </ligand>
</feature>
<accession>Q9YBY8</accession>
<dbReference type="EC" id="1.2.1.103" evidence="1"/>
<dbReference type="EC" id="1.2.1.106" evidence="1"/>
<dbReference type="EMBL" id="BA000002">
    <property type="protein sequence ID" value="BAA80460.1"/>
    <property type="molecule type" value="Genomic_DNA"/>
</dbReference>
<dbReference type="PIR" id="F72625">
    <property type="entry name" value="F72625"/>
</dbReference>
<dbReference type="RefSeq" id="WP_010866387.1">
    <property type="nucleotide sequence ID" value="NC_000854.2"/>
</dbReference>
<dbReference type="SMR" id="Q9YBY8"/>
<dbReference type="STRING" id="272557.APE_1462"/>
<dbReference type="EnsemblBacteria" id="BAA80460">
    <property type="protein sequence ID" value="BAA80460"/>
    <property type="gene ID" value="APE_1462"/>
</dbReference>
<dbReference type="GeneID" id="1446031"/>
<dbReference type="KEGG" id="ape:APE_1462"/>
<dbReference type="eggNOG" id="arCOG00495">
    <property type="taxonomic scope" value="Archaea"/>
</dbReference>
<dbReference type="UniPathway" id="UPA00033">
    <property type="reaction ID" value="UER00037"/>
</dbReference>
<dbReference type="UniPathway" id="UPA00068"/>
<dbReference type="Proteomes" id="UP000002518">
    <property type="component" value="Chromosome"/>
</dbReference>
<dbReference type="GO" id="GO:0005737">
    <property type="term" value="C:cytoplasm"/>
    <property type="evidence" value="ECO:0007669"/>
    <property type="project" value="UniProtKB-SubCell"/>
</dbReference>
<dbReference type="GO" id="GO:0043870">
    <property type="term" value="F:N-acetyl-gamma-aminoadipyl-phosphate reductase activity"/>
    <property type="evidence" value="ECO:0007669"/>
    <property type="project" value="RHEA"/>
</dbReference>
<dbReference type="GO" id="GO:0003942">
    <property type="term" value="F:N-acetyl-gamma-glutamyl-phosphate reductase activity"/>
    <property type="evidence" value="ECO:0007669"/>
    <property type="project" value="InterPro"/>
</dbReference>
<dbReference type="GO" id="GO:0051287">
    <property type="term" value="F:NAD binding"/>
    <property type="evidence" value="ECO:0007669"/>
    <property type="project" value="InterPro"/>
</dbReference>
<dbReference type="GO" id="GO:0070401">
    <property type="term" value="F:NADP+ binding"/>
    <property type="evidence" value="ECO:0007669"/>
    <property type="project" value="InterPro"/>
</dbReference>
<dbReference type="GO" id="GO:0042450">
    <property type="term" value="P:arginine biosynthetic process via ornithine"/>
    <property type="evidence" value="ECO:0007669"/>
    <property type="project" value="UniProtKB-UniRule"/>
</dbReference>
<dbReference type="GO" id="GO:0006526">
    <property type="term" value="P:L-arginine biosynthetic process"/>
    <property type="evidence" value="ECO:0007669"/>
    <property type="project" value="UniProtKB-UniPathway"/>
</dbReference>
<dbReference type="GO" id="GO:0019878">
    <property type="term" value="P:lysine biosynthetic process via aminoadipic acid"/>
    <property type="evidence" value="ECO:0007669"/>
    <property type="project" value="UniProtKB-UniRule"/>
</dbReference>
<dbReference type="CDD" id="cd17895">
    <property type="entry name" value="AGPR_1_N"/>
    <property type="match status" value="1"/>
</dbReference>
<dbReference type="Gene3D" id="3.30.360.10">
    <property type="entry name" value="Dihydrodipicolinate Reductase, domain 2"/>
    <property type="match status" value="1"/>
</dbReference>
<dbReference type="Gene3D" id="3.40.50.720">
    <property type="entry name" value="NAD(P)-binding Rossmann-like Domain"/>
    <property type="match status" value="1"/>
</dbReference>
<dbReference type="HAMAP" id="MF_00150">
    <property type="entry name" value="ArgC_type1"/>
    <property type="match status" value="1"/>
</dbReference>
<dbReference type="HAMAP" id="MF_02083">
    <property type="entry name" value="LysY"/>
    <property type="match status" value="1"/>
</dbReference>
<dbReference type="InterPro" id="IPR023013">
    <property type="entry name" value="AGPR_AS"/>
</dbReference>
<dbReference type="InterPro" id="IPR000706">
    <property type="entry name" value="AGPR_type-1"/>
</dbReference>
<dbReference type="InterPro" id="IPR037535">
    <property type="entry name" value="LysY"/>
</dbReference>
<dbReference type="InterPro" id="IPR036291">
    <property type="entry name" value="NAD(P)-bd_dom_sf"/>
</dbReference>
<dbReference type="InterPro" id="IPR050085">
    <property type="entry name" value="NAGSA_dehydrogenase"/>
</dbReference>
<dbReference type="InterPro" id="IPR000534">
    <property type="entry name" value="Semialdehyde_DH_NAD-bd"/>
</dbReference>
<dbReference type="NCBIfam" id="TIGR01850">
    <property type="entry name" value="argC"/>
    <property type="match status" value="1"/>
</dbReference>
<dbReference type="PANTHER" id="PTHR32338:SF11">
    <property type="entry name" value="[LYSW]-L-2-AMINOADIPATE_[LYSW]-L-GLUTAMATE PHOSPHATE REDUCTASE-RELATED"/>
    <property type="match status" value="1"/>
</dbReference>
<dbReference type="PANTHER" id="PTHR32338">
    <property type="entry name" value="N-ACETYL-GAMMA-GLUTAMYL-PHOSPHATE REDUCTASE, CHLOROPLASTIC-RELATED-RELATED"/>
    <property type="match status" value="1"/>
</dbReference>
<dbReference type="Pfam" id="PF01118">
    <property type="entry name" value="Semialdhyde_dh"/>
    <property type="match status" value="1"/>
</dbReference>
<dbReference type="Pfam" id="PF22698">
    <property type="entry name" value="Semialdhyde_dhC_1"/>
    <property type="match status" value="1"/>
</dbReference>
<dbReference type="SMART" id="SM00859">
    <property type="entry name" value="Semialdhyde_dh"/>
    <property type="match status" value="1"/>
</dbReference>
<dbReference type="SUPFAM" id="SSF55347">
    <property type="entry name" value="Glyceraldehyde-3-phosphate dehydrogenase-like, C-terminal domain"/>
    <property type="match status" value="1"/>
</dbReference>
<dbReference type="SUPFAM" id="SSF51735">
    <property type="entry name" value="NAD(P)-binding Rossmann-fold domains"/>
    <property type="match status" value="1"/>
</dbReference>
<dbReference type="PROSITE" id="PS01224">
    <property type="entry name" value="ARGC"/>
    <property type="match status" value="1"/>
</dbReference>
<keyword id="KW-0028">Amino-acid biosynthesis</keyword>
<keyword id="KW-0055">Arginine biosynthesis</keyword>
<keyword id="KW-0963">Cytoplasm</keyword>
<keyword id="KW-0457">Lysine biosynthesis</keyword>
<keyword id="KW-0521">NADP</keyword>
<keyword id="KW-0560">Oxidoreductase</keyword>
<keyword id="KW-1185">Reference proteome</keyword>
<proteinExistence type="inferred from homology"/>
<gene>
    <name evidence="1" type="primary">lysY</name>
    <name type="synonym">argC</name>
    <name type="ordered locus">APE_1462</name>
</gene>
<evidence type="ECO:0000255" key="1">
    <source>
        <dbReference type="HAMAP-Rule" id="MF_02083"/>
    </source>
</evidence>
<sequence>MARAVRAGILGASGMTGGELLRILASHPGVEVEWATSREYAGKPVHTAHPHLRGFYTGLKYTSIDKIDIGEVDVVFNALPHGVGASIVAEAYENGVRVVDLSADYRLRDQSLYPKLYGFKHPRPDLLEEAIYALPEIYGEKLRGARLAAVPGCNATAAILAAAPLVASKIIDMDVGIIVDVKAASSEAGSKPSRHSIHPLREGSARPYTPWGHRHAAEAVQVLRDLVGRGIRLSLVPHAVSMTRGVLASAHALLRDNIGFSEAVRAYASFYKDSQIVRVKPMAPGLPVDPPDVKNVIGSMFAEVGFAVEEESGRITGFAAIDNLVRGAAGQAVYAMNAMLGFDEWEGLRSPPLRP</sequence>
<name>LYSY_AERPE</name>
<organism>
    <name type="scientific">Aeropyrum pernix (strain ATCC 700893 / DSM 11879 / JCM 9820 / NBRC 100138 / K1)</name>
    <dbReference type="NCBI Taxonomy" id="272557"/>
    <lineage>
        <taxon>Archaea</taxon>
        <taxon>Thermoproteota</taxon>
        <taxon>Thermoprotei</taxon>
        <taxon>Desulfurococcales</taxon>
        <taxon>Desulfurococcaceae</taxon>
        <taxon>Aeropyrum</taxon>
    </lineage>
</organism>
<reference key="1">
    <citation type="journal article" date="1999" name="DNA Res.">
        <title>Complete genome sequence of an aerobic hyper-thermophilic crenarchaeon, Aeropyrum pernix K1.</title>
        <authorList>
            <person name="Kawarabayasi Y."/>
            <person name="Hino Y."/>
            <person name="Horikawa H."/>
            <person name="Yamazaki S."/>
            <person name="Haikawa Y."/>
            <person name="Jin-no K."/>
            <person name="Takahashi M."/>
            <person name="Sekine M."/>
            <person name="Baba S."/>
            <person name="Ankai A."/>
            <person name="Kosugi H."/>
            <person name="Hosoyama A."/>
            <person name="Fukui S."/>
            <person name="Nagai Y."/>
            <person name="Nishijima K."/>
            <person name="Nakazawa H."/>
            <person name="Takamiya M."/>
            <person name="Masuda S."/>
            <person name="Funahashi T."/>
            <person name="Tanaka T."/>
            <person name="Kudoh Y."/>
            <person name="Yamazaki J."/>
            <person name="Kushida N."/>
            <person name="Oguchi A."/>
            <person name="Aoki K."/>
            <person name="Kubota K."/>
            <person name="Nakamura Y."/>
            <person name="Nomura N."/>
            <person name="Sako Y."/>
            <person name="Kikuchi H."/>
        </authorList>
    </citation>
    <scope>NUCLEOTIDE SEQUENCE [LARGE SCALE GENOMIC DNA]</scope>
    <source>
        <strain>ATCC 700893 / DSM 11879 / JCM 9820 / NBRC 100138 / K1</strain>
    </source>
</reference>